<protein>
    <recommendedName>
        <fullName>26S proteasome non-ATPase regulatory subunit 9</fullName>
    </recommendedName>
    <alternativeName>
        <fullName>26S proteasome regulatory subunit p27</fullName>
    </alternativeName>
    <alternativeName>
        <fullName>Transactivating protein Bridge-1</fullName>
    </alternativeName>
</protein>
<organism>
    <name type="scientific">Rattus norvegicus</name>
    <name type="common">Rat</name>
    <dbReference type="NCBI Taxonomy" id="10116"/>
    <lineage>
        <taxon>Eukaryota</taxon>
        <taxon>Metazoa</taxon>
        <taxon>Chordata</taxon>
        <taxon>Craniata</taxon>
        <taxon>Vertebrata</taxon>
        <taxon>Euteleostomi</taxon>
        <taxon>Mammalia</taxon>
        <taxon>Eutheria</taxon>
        <taxon>Euarchontoglires</taxon>
        <taxon>Glires</taxon>
        <taxon>Rodentia</taxon>
        <taxon>Myomorpha</taxon>
        <taxon>Muroidea</taxon>
        <taxon>Muridae</taxon>
        <taxon>Murinae</taxon>
        <taxon>Rattus</taxon>
    </lineage>
</organism>
<feature type="chain" id="PRO_0000173854" description="26S proteasome non-ATPase regulatory subunit 9">
    <location>
        <begin position="1"/>
        <end position="222"/>
    </location>
</feature>
<feature type="domain" description="PDZ">
    <location>
        <begin position="108"/>
        <end position="194"/>
    </location>
</feature>
<feature type="modified residue" description="Phosphoserine" evidence="3">
    <location>
        <position position="128"/>
    </location>
</feature>
<sequence length="222" mass="24829">MSSEEVRHRAESSEARAAAVSDIQELMRRKEEIEAQIKANYDVLESQKGIGMNEPLVDCEGYPRADVDLYQVRTARHNIICLQNDHKALMKQVEEALHQLHARDKEKQARDMAEAREEAMNRRLASDSPALPKAFARVNSISPGSPASIAGLQVDDEIVEFGSVNTQNFQSLQNVGTVVQHSEGKPLNVMVIRRGEKHQLRLTPTRWAGKGLLGCNITPLQR</sequence>
<keyword id="KW-0143">Chaperone</keyword>
<keyword id="KW-0903">Direct protein sequencing</keyword>
<keyword id="KW-0597">Phosphoprotein</keyword>
<keyword id="KW-1185">Reference proteome</keyword>
<proteinExistence type="evidence at protein level"/>
<dbReference type="EMBL" id="AF067728">
    <property type="protein sequence ID" value="AAD32925.1"/>
    <property type="molecule type" value="mRNA"/>
</dbReference>
<dbReference type="RefSeq" id="NP_569114.1">
    <property type="nucleotide sequence ID" value="NM_130430.1"/>
</dbReference>
<dbReference type="SMR" id="Q9WTV5"/>
<dbReference type="BioGRID" id="250907">
    <property type="interactions" value="2"/>
</dbReference>
<dbReference type="FunCoup" id="Q9WTV5">
    <property type="interactions" value="3240"/>
</dbReference>
<dbReference type="IntAct" id="Q9WTV5">
    <property type="interactions" value="1"/>
</dbReference>
<dbReference type="MINT" id="Q9WTV5"/>
<dbReference type="STRING" id="10116.ENSRNOP00000054528"/>
<dbReference type="iPTMnet" id="Q9WTV5"/>
<dbReference type="PhosphoSitePlus" id="Q9WTV5"/>
<dbReference type="jPOST" id="Q9WTV5"/>
<dbReference type="PaxDb" id="10116-ENSRNOP00000054528"/>
<dbReference type="GeneID" id="161475"/>
<dbReference type="KEGG" id="rno:161475"/>
<dbReference type="UCSC" id="RGD:621110">
    <property type="organism name" value="rat"/>
</dbReference>
<dbReference type="AGR" id="RGD:621110"/>
<dbReference type="CTD" id="5715"/>
<dbReference type="RGD" id="621110">
    <property type="gene designation" value="Psmd9"/>
</dbReference>
<dbReference type="eggNOG" id="KOG3129">
    <property type="taxonomic scope" value="Eukaryota"/>
</dbReference>
<dbReference type="InParanoid" id="Q9WTV5"/>
<dbReference type="PhylomeDB" id="Q9WTV5"/>
<dbReference type="Reactome" id="R-RNO-9907900">
    <property type="pathway name" value="Proteasome assembly"/>
</dbReference>
<dbReference type="PRO" id="PR:Q9WTV5"/>
<dbReference type="Proteomes" id="UP000002494">
    <property type="component" value="Unplaced"/>
</dbReference>
<dbReference type="GO" id="GO:0005737">
    <property type="term" value="C:cytoplasm"/>
    <property type="evidence" value="ECO:0000318"/>
    <property type="project" value="GO_Central"/>
</dbReference>
<dbReference type="GO" id="GO:0005634">
    <property type="term" value="C:nucleus"/>
    <property type="evidence" value="ECO:0000314"/>
    <property type="project" value="BHF-UCL"/>
</dbReference>
<dbReference type="GO" id="GO:0008540">
    <property type="term" value="C:proteasome regulatory particle, base subcomplex"/>
    <property type="evidence" value="ECO:0000266"/>
    <property type="project" value="RGD"/>
</dbReference>
<dbReference type="GO" id="GO:0043425">
    <property type="term" value="F:bHLH transcription factor binding"/>
    <property type="evidence" value="ECO:0000314"/>
    <property type="project" value="BHF-UCL"/>
</dbReference>
<dbReference type="GO" id="GO:0003713">
    <property type="term" value="F:transcription coactivator activity"/>
    <property type="evidence" value="ECO:0000314"/>
    <property type="project" value="BHF-UCL"/>
</dbReference>
<dbReference type="GO" id="GO:0046676">
    <property type="term" value="P:negative regulation of insulin secretion"/>
    <property type="evidence" value="ECO:0000315"/>
    <property type="project" value="BHF-UCL"/>
</dbReference>
<dbReference type="GO" id="GO:0045893">
    <property type="term" value="P:positive regulation of DNA-templated transcription"/>
    <property type="evidence" value="ECO:0000314"/>
    <property type="project" value="BHF-UCL"/>
</dbReference>
<dbReference type="GO" id="GO:0032024">
    <property type="term" value="P:positive regulation of insulin secretion"/>
    <property type="evidence" value="ECO:0000314"/>
    <property type="project" value="BHF-UCL"/>
</dbReference>
<dbReference type="GO" id="GO:0045944">
    <property type="term" value="P:positive regulation of transcription by RNA polymerase II"/>
    <property type="evidence" value="ECO:0000314"/>
    <property type="project" value="RGD"/>
</dbReference>
<dbReference type="GO" id="GO:0070682">
    <property type="term" value="P:proteasome regulatory particle assembly"/>
    <property type="evidence" value="ECO:0000250"/>
    <property type="project" value="UniProtKB"/>
</dbReference>
<dbReference type="GO" id="GO:0097050">
    <property type="term" value="P:type B pancreatic cell apoptotic process"/>
    <property type="evidence" value="ECO:0000315"/>
    <property type="project" value="BHF-UCL"/>
</dbReference>
<dbReference type="FunFam" id="2.30.42.10:FF:000107">
    <property type="entry name" value="26S proteasome non-ATPase regulatory subunit 9"/>
    <property type="match status" value="1"/>
</dbReference>
<dbReference type="Gene3D" id="2.30.42.10">
    <property type="match status" value="1"/>
</dbReference>
<dbReference type="Gene3D" id="6.10.140.1710">
    <property type="match status" value="1"/>
</dbReference>
<dbReference type="InterPro" id="IPR040815">
    <property type="entry name" value="Nas2_N"/>
</dbReference>
<dbReference type="InterPro" id="IPR001478">
    <property type="entry name" value="PDZ"/>
</dbReference>
<dbReference type="InterPro" id="IPR041489">
    <property type="entry name" value="PDZ_6"/>
</dbReference>
<dbReference type="InterPro" id="IPR036034">
    <property type="entry name" value="PDZ_sf"/>
</dbReference>
<dbReference type="InterPro" id="IPR035269">
    <property type="entry name" value="PSMD9"/>
</dbReference>
<dbReference type="PANTHER" id="PTHR12651">
    <property type="entry name" value="26S PROTEASOME NON-ATPASE REGULATORY SUBUNIT 9"/>
    <property type="match status" value="1"/>
</dbReference>
<dbReference type="PANTHER" id="PTHR12651:SF1">
    <property type="entry name" value="26S PROTEASOME NON-ATPASE REGULATORY SUBUNIT 9"/>
    <property type="match status" value="1"/>
</dbReference>
<dbReference type="Pfam" id="PF18265">
    <property type="entry name" value="Nas2_N"/>
    <property type="match status" value="1"/>
</dbReference>
<dbReference type="Pfam" id="PF17820">
    <property type="entry name" value="PDZ_6"/>
    <property type="match status" value="1"/>
</dbReference>
<dbReference type="SMART" id="SM00228">
    <property type="entry name" value="PDZ"/>
    <property type="match status" value="1"/>
</dbReference>
<dbReference type="SUPFAM" id="SSF50156">
    <property type="entry name" value="PDZ domain-like"/>
    <property type="match status" value="1"/>
</dbReference>
<name>PSMD9_RAT</name>
<gene>
    <name type="primary">Psmd9</name>
</gene>
<reference key="1">
    <citation type="journal article" date="1999" name="Mol. Cell. Biol.">
        <title>Bridge-1, a novel PDZ-domain coactivator of E2A-mediated regulation of insulin gene transcription.</title>
        <authorList>
            <person name="Thomas M.K."/>
            <person name="Yao K.-M."/>
            <person name="Tenser M.S."/>
            <person name="Wong G.G."/>
            <person name="Habener J.F."/>
        </authorList>
    </citation>
    <scope>NUCLEOTIDE SEQUENCE [MRNA]</scope>
    <source>
        <tissue>Pancreas</tissue>
    </source>
</reference>
<reference key="2">
    <citation type="submission" date="2007-04" db="UniProtKB">
        <authorList>
            <person name="Lubec G."/>
            <person name="Diao W."/>
        </authorList>
    </citation>
    <scope>PROTEIN SEQUENCE OF 17-28; 39-73; 77-87; 92-103; 124-133 AND 211-222</scope>
    <scope>IDENTIFICATION BY MASS SPECTROMETRY</scope>
    <source>
        <strain>Sprague-Dawley</strain>
        <tissue>Hippocampus</tissue>
    </source>
</reference>
<reference key="3">
    <citation type="journal article" date="2012" name="Nat. Commun.">
        <title>Quantitative maps of protein phosphorylation sites across 14 different rat organs and tissues.</title>
        <authorList>
            <person name="Lundby A."/>
            <person name="Secher A."/>
            <person name="Lage K."/>
            <person name="Nordsborg N.B."/>
            <person name="Dmytriyev A."/>
            <person name="Lundby C."/>
            <person name="Olsen J.V."/>
        </authorList>
    </citation>
    <scope>PHOSPHORYLATION [LARGE SCALE ANALYSIS] AT SER-128</scope>
    <scope>IDENTIFICATION BY MASS SPECTROMETRY [LARGE SCALE ANALYSIS]</scope>
</reference>
<evidence type="ECO:0000250" key="1"/>
<evidence type="ECO:0000305" key="2"/>
<evidence type="ECO:0007744" key="3">
    <source>
    </source>
</evidence>
<accession>Q9WTV5</accession>
<comment type="function">
    <text evidence="1">Acts as a chaperone during the assembly of the 26S proteasome, specifically of the base subcomplex of the PA700/19S regulatory complex (RC). During the base subcomplex assembly is part of an intermediate PSMD9:PSMC6:PSMC3 module, also known as modulator trimer complex; PSMD9 is released during the further base assembly process (By similarity).</text>
</comment>
<comment type="subunit">
    <text evidence="1">Interacts with PSMC3. Part of a transient complex (modulator) containing PSMD9, PSMC6 and PSMC3 formed during the assembly of the 26S proteasome (By similarity).</text>
</comment>
<comment type="interaction">
    <interactant intactId="EBI-7626072">
        <id>Q9WTV5</id>
    </interactant>
    <interactant intactId="EBI-7626093">
        <id>P52947</id>
        <label>Pdx1</label>
    </interactant>
    <organismsDiffer>false</organismsDiffer>
    <experiments>3</experiments>
</comment>
<comment type="similarity">
    <text evidence="2">Belongs to the proteasome subunit p27 family.</text>
</comment>